<name>P15_CILVC</name>
<reference key="1">
    <citation type="journal article" date="2006" name="J. Gen. Virol.">
        <title>Complete nucleotide sequence, genomic organization and phylogenetic analysis of Citrus leprosis virus cytoplasmic type.</title>
        <authorList>
            <person name="Locali-Fabris E.C."/>
            <person name="Freitas-Astua J."/>
            <person name="Souza A.A."/>
            <person name="Takita M.A."/>
            <person name="Astua-Monge G."/>
            <person name="Antonioli-Luizon R."/>
            <person name="Rodrigues V."/>
            <person name="Targon M.L."/>
            <person name="Machado M.A."/>
        </authorList>
    </citation>
    <scope>NUCLEOTIDE SEQUENCE [GENOMIC RNA]</scope>
</reference>
<reference key="2">
    <citation type="submission" date="2006-01" db="EMBL/GenBank/DDBJ databases">
        <authorList>
            <person name="Locali E.C."/>
            <person name="Freitas-Astua J."/>
            <person name="Souza A.A."/>
            <person name="Takita M.A."/>
            <person name="Astua-Monge G."/>
            <person name="Antonioli-Luizon R."/>
            <person name="Rodrigues V."/>
            <person name="Targon M.L.P.N."/>
            <person name="Machado M.A."/>
        </authorList>
    </citation>
    <scope>NUCLEOTIDE SEQUENCE [GENOMIC RNA]</scope>
</reference>
<reference key="3">
    <citation type="journal article" date="2006" name="Virus Genes">
        <title>The complete nucleotide sequence and genomic organization of Citrus Leprosis associated Virus, Cytoplasmatic type (CiLV-C).</title>
        <authorList>
            <person name="Pascon R.C."/>
            <person name="Kitajima J.P."/>
            <person name="Breton M.C."/>
            <person name="Assumpcao L."/>
            <person name="Greggio C."/>
            <person name="Zanca A.S."/>
            <person name="Okura V.K."/>
            <person name="Alegria M.C."/>
            <person name="Camargo M.E."/>
            <person name="Silva G.G."/>
            <person name="Cardozo J.C."/>
            <person name="Vallim M.A."/>
            <person name="Franco S.F."/>
            <person name="Silva V.H."/>
            <person name="Jordao H. Jr."/>
            <person name="Oliveira F."/>
            <person name="Giachetto P.F."/>
            <person name="Ferrari F."/>
            <person name="Aguilar-Vildoso C.I."/>
            <person name="Franchiscini F.J."/>
            <person name="Silva J.M."/>
            <person name="Arruda P."/>
            <person name="Ferro J.A."/>
            <person name="Reinach F."/>
            <person name="da Silva A.C."/>
        </authorList>
    </citation>
    <scope>NUCLEOTIDE SEQUENCE [GENOMIC RNA]</scope>
</reference>
<reference key="4">
    <citation type="submission" date="2006-06" db="EMBL/GenBank/DDBJ databases">
        <title>Isolated nucleic acids molecules from the genome of citrus leprosis virus and uses thereof.</title>
        <authorList>
            <person name="Pascon R.C."/>
            <person name="Silva A.C.R."/>
        </authorList>
    </citation>
    <scope>NUCLEOTIDE SEQUENCE [GENOMIC RNA]</scope>
</reference>
<reference key="5">
    <citation type="submission" date="2005-08" db="EMBL/GenBank/DDBJ databases">
        <authorList>
            <person name="Kitajima J.F.W."/>
            <person name="Martins A.R."/>
        </authorList>
    </citation>
    <scope>NUCLEOTIDE SEQUENCE [GENOMIC RNA]</scope>
</reference>
<accession>Q1KZ57</accession>
<keyword id="KW-1185">Reference proteome</keyword>
<gene>
    <name type="primary">p15</name>
</gene>
<proteinExistence type="predicted"/>
<organism>
    <name type="scientific">Citrus leprosis virus C (isolate Citrus sinesis/Brazil/Cordeiropolis/2003)</name>
    <name type="common">CiLV-C</name>
    <dbReference type="NCBI Taxonomy" id="686950"/>
    <lineage>
        <taxon>Viruses</taxon>
        <taxon>Riboviria</taxon>
        <taxon>Orthornavirae</taxon>
        <taxon>Kitrinoviricota</taxon>
        <taxon>Alsuviricetes</taxon>
        <taxon>Martellivirales</taxon>
        <taxon>Kitaviridae</taxon>
        <taxon>Cilevirus</taxon>
        <taxon>Cilevirus leprosis</taxon>
    </lineage>
</organism>
<organismHost>
    <name type="scientific">Citrus sinensis</name>
    <name type="common">Sweet orange</name>
    <name type="synonym">Citrus aurantium var. sinensis</name>
    <dbReference type="NCBI Taxonomy" id="2711"/>
</organismHost>
<feature type="chain" id="PRO_0000404537" description="Uncharacterized protein p15">
    <location>
        <begin position="1"/>
        <end position="130"/>
    </location>
</feature>
<dbReference type="EMBL" id="DQ157465">
    <property type="protein sequence ID" value="ABA42873.1"/>
    <property type="molecule type" value="Genomic_RNA"/>
</dbReference>
<dbReference type="EMBL" id="DQ352195">
    <property type="protein sequence ID" value="ABC75823.1"/>
    <property type="molecule type" value="Genomic_RNA"/>
</dbReference>
<dbReference type="RefSeq" id="YP_654540.1">
    <property type="nucleotide sequence ID" value="NC_008170.1"/>
</dbReference>
<dbReference type="GeneID" id="4155850"/>
<dbReference type="KEGG" id="vg:4155850"/>
<dbReference type="Proteomes" id="UP000001101">
    <property type="component" value="Genome"/>
</dbReference>
<protein>
    <recommendedName>
        <fullName>Uncharacterized protein p15</fullName>
    </recommendedName>
</protein>
<sequence length="130" mass="15191">MLNWSTIEWDSFWQQHDCGCFTFECDFITSIDPLVHDYAIYHSLSQKTVLEMLQTHLVAGPDASETIRRQVAFLIYDFHRLSCNCDKCYGDCNATTTGRFKVVDRVLNDHIEFGIMRRQDLIPILHNLET</sequence>